<keyword id="KW-0963">Cytoplasm</keyword>
<keyword id="KW-1017">Isopeptide bond</keyword>
<keyword id="KW-1185">Reference proteome</keyword>
<keyword id="KW-0819">tRNA processing</keyword>
<keyword id="KW-0833">Ubl conjugation pathway</keyword>
<organism>
    <name type="scientific">Aspergillus oryzae (strain ATCC 42149 / RIB 40)</name>
    <name type="common">Yellow koji mold</name>
    <dbReference type="NCBI Taxonomy" id="510516"/>
    <lineage>
        <taxon>Eukaryota</taxon>
        <taxon>Fungi</taxon>
        <taxon>Dikarya</taxon>
        <taxon>Ascomycota</taxon>
        <taxon>Pezizomycotina</taxon>
        <taxon>Eurotiomycetes</taxon>
        <taxon>Eurotiomycetidae</taxon>
        <taxon>Eurotiales</taxon>
        <taxon>Aspergillaceae</taxon>
        <taxon>Aspergillus</taxon>
        <taxon>Aspergillus subgen. Circumdati</taxon>
    </lineage>
</organism>
<evidence type="ECO:0000255" key="1">
    <source>
        <dbReference type="HAMAP-Rule" id="MF_03048"/>
    </source>
</evidence>
<feature type="chain" id="PRO_0000367874" description="Ubiquitin-related modifier 1">
    <location>
        <begin position="1"/>
        <end position="120"/>
    </location>
</feature>
<feature type="modified residue" description="1-thioglycine" evidence="1">
    <location>
        <position position="120"/>
    </location>
</feature>
<feature type="cross-link" description="Glycyl lysine isopeptide (Gly-Lys) (interchain with K-? in acceptor proteins)" evidence="1">
    <location>
        <position position="120"/>
    </location>
</feature>
<comment type="function">
    <text evidence="1">Acts as a sulfur carrier required for 2-thiolation of mcm(5)S(2)U at tRNA wobble positions of cytosolic tRNA(Lys), tRNA(Glu) and tRNA(Gln). Serves as sulfur donor in tRNA 2-thiolation reaction by being thiocarboxylated (-COSH) at its C-terminus by the MOCS3 homolog UBA4. The sulfur is then transferred to tRNA to form 2-thiolation of mcm(5)S(2)U. Prior mcm(5) tRNA modification by the elongator complex is required for 2-thiolation. Also acts as a ubiquitin-like protein (UBL) that is covalently conjugated via an isopeptide bond to lysine residues of target proteins such as AHP1. The thiocarboxylated form serves as substrate for conjugation and oxidative stress specifically induces the formation of UBL-protein conjugates.</text>
</comment>
<comment type="pathway">
    <text evidence="1">tRNA modification; 5-methoxycarbonylmethyl-2-thiouridine-tRNA biosynthesis.</text>
</comment>
<comment type="subcellular location">
    <subcellularLocation>
        <location evidence="1">Cytoplasm</location>
    </subcellularLocation>
</comment>
<comment type="PTM">
    <text evidence="1">C-terminal thiocarboxylation occurs in 2 steps, it is first acyl-adenylated (-COAMP) via the hesA/moeB/thiF part of UBA4, then thiocarboxylated (-COSH) via the rhodanese domain of UBA4.</text>
</comment>
<comment type="similarity">
    <text evidence="1">Belongs to the URM1 family.</text>
</comment>
<proteinExistence type="inferred from homology"/>
<sequence length="120" mass="13434">MTTDTEINPESARPEAHGSLSVTVEFTGGLEMLFSNERKHSVTLPARLSDGGRPSISFLLEYLVKNVMKDERKELFMLEDNVRPGILVLINDADWELEGEEKYELQPADNIVFVSTLHGG</sequence>
<accession>Q2U9H6</accession>
<reference key="1">
    <citation type="journal article" date="2005" name="Nature">
        <title>Genome sequencing and analysis of Aspergillus oryzae.</title>
        <authorList>
            <person name="Machida M."/>
            <person name="Asai K."/>
            <person name="Sano M."/>
            <person name="Tanaka T."/>
            <person name="Kumagai T."/>
            <person name="Terai G."/>
            <person name="Kusumoto K."/>
            <person name="Arima T."/>
            <person name="Akita O."/>
            <person name="Kashiwagi Y."/>
            <person name="Abe K."/>
            <person name="Gomi K."/>
            <person name="Horiuchi H."/>
            <person name="Kitamoto K."/>
            <person name="Kobayashi T."/>
            <person name="Takeuchi M."/>
            <person name="Denning D.W."/>
            <person name="Galagan J.E."/>
            <person name="Nierman W.C."/>
            <person name="Yu J."/>
            <person name="Archer D.B."/>
            <person name="Bennett J.W."/>
            <person name="Bhatnagar D."/>
            <person name="Cleveland T.E."/>
            <person name="Fedorova N.D."/>
            <person name="Gotoh O."/>
            <person name="Horikawa H."/>
            <person name="Hosoyama A."/>
            <person name="Ichinomiya M."/>
            <person name="Igarashi R."/>
            <person name="Iwashita K."/>
            <person name="Juvvadi P.R."/>
            <person name="Kato M."/>
            <person name="Kato Y."/>
            <person name="Kin T."/>
            <person name="Kokubun A."/>
            <person name="Maeda H."/>
            <person name="Maeyama N."/>
            <person name="Maruyama J."/>
            <person name="Nagasaki H."/>
            <person name="Nakajima T."/>
            <person name="Oda K."/>
            <person name="Okada K."/>
            <person name="Paulsen I."/>
            <person name="Sakamoto K."/>
            <person name="Sawano T."/>
            <person name="Takahashi M."/>
            <person name="Takase K."/>
            <person name="Terabayashi Y."/>
            <person name="Wortman J.R."/>
            <person name="Yamada O."/>
            <person name="Yamagata Y."/>
            <person name="Anazawa H."/>
            <person name="Hata Y."/>
            <person name="Koide Y."/>
            <person name="Komori T."/>
            <person name="Koyama Y."/>
            <person name="Minetoki T."/>
            <person name="Suharnan S."/>
            <person name="Tanaka A."/>
            <person name="Isono K."/>
            <person name="Kuhara S."/>
            <person name="Ogasawara N."/>
            <person name="Kikuchi H."/>
        </authorList>
    </citation>
    <scope>NUCLEOTIDE SEQUENCE [LARGE SCALE GENOMIC DNA]</scope>
    <source>
        <strain>ATCC 42149 / RIB 40</strain>
    </source>
</reference>
<gene>
    <name type="primary">urm1</name>
    <name type="ORF">AO090701000028</name>
</gene>
<name>URM1_ASPOR</name>
<protein>
    <recommendedName>
        <fullName evidence="1">Ubiquitin-related modifier 1</fullName>
    </recommendedName>
</protein>
<dbReference type="EMBL" id="BA000053">
    <property type="protein sequence ID" value="BAE61789.1"/>
    <property type="molecule type" value="Genomic_DNA"/>
</dbReference>
<dbReference type="RefSeq" id="XP_001822922.1">
    <property type="nucleotide sequence ID" value="XM_001822870.2"/>
</dbReference>
<dbReference type="SMR" id="Q2U9H6"/>
<dbReference type="STRING" id="510516.Q2U9H6"/>
<dbReference type="EnsemblFungi" id="BAE61789">
    <property type="protein sequence ID" value="BAE61789"/>
    <property type="gene ID" value="AO090701000028"/>
</dbReference>
<dbReference type="GeneID" id="5994979"/>
<dbReference type="KEGG" id="aor:AO090701000028"/>
<dbReference type="VEuPathDB" id="FungiDB:AO090701000028"/>
<dbReference type="HOGENOM" id="CLU_148208_0_0_1"/>
<dbReference type="OMA" id="DYELQPN"/>
<dbReference type="OrthoDB" id="4905at5052"/>
<dbReference type="UniPathway" id="UPA00988"/>
<dbReference type="Proteomes" id="UP000006564">
    <property type="component" value="Chromosome 5"/>
</dbReference>
<dbReference type="GO" id="GO:0005829">
    <property type="term" value="C:cytosol"/>
    <property type="evidence" value="ECO:0007669"/>
    <property type="project" value="UniProtKB-UniRule"/>
</dbReference>
<dbReference type="GO" id="GO:0032447">
    <property type="term" value="P:protein urmylation"/>
    <property type="evidence" value="ECO:0007669"/>
    <property type="project" value="UniProtKB-UniRule"/>
</dbReference>
<dbReference type="GO" id="GO:0034227">
    <property type="term" value="P:tRNA thio-modification"/>
    <property type="evidence" value="ECO:0007669"/>
    <property type="project" value="UniProtKB-UniRule"/>
</dbReference>
<dbReference type="GO" id="GO:0002098">
    <property type="term" value="P:tRNA wobble uridine modification"/>
    <property type="evidence" value="ECO:0007669"/>
    <property type="project" value="UniProtKB-UniRule"/>
</dbReference>
<dbReference type="CDD" id="cd01764">
    <property type="entry name" value="Ubl_Urm1"/>
    <property type="match status" value="1"/>
</dbReference>
<dbReference type="Gene3D" id="3.10.20.30">
    <property type="match status" value="1"/>
</dbReference>
<dbReference type="HAMAP" id="MF_03048">
    <property type="entry name" value="Urm1"/>
    <property type="match status" value="1"/>
</dbReference>
<dbReference type="InterPro" id="IPR012675">
    <property type="entry name" value="Beta-grasp_dom_sf"/>
</dbReference>
<dbReference type="InterPro" id="IPR016155">
    <property type="entry name" value="Mopterin_synth/thiamin_S_b"/>
</dbReference>
<dbReference type="InterPro" id="IPR015221">
    <property type="entry name" value="Urm1"/>
</dbReference>
<dbReference type="PANTHER" id="PTHR14986">
    <property type="entry name" value="RURM1 PROTEIN"/>
    <property type="match status" value="1"/>
</dbReference>
<dbReference type="Pfam" id="PF09138">
    <property type="entry name" value="Urm1"/>
    <property type="match status" value="1"/>
</dbReference>
<dbReference type="PIRSF" id="PIRSF037379">
    <property type="entry name" value="Ubiquitin-related_modifier_1"/>
    <property type="match status" value="1"/>
</dbReference>
<dbReference type="SUPFAM" id="SSF54285">
    <property type="entry name" value="MoaD/ThiS"/>
    <property type="match status" value="1"/>
</dbReference>